<feature type="chain" id="PRO_0000424588" description="Leucine aminopeptidase">
    <location>
        <begin position="1"/>
        <end position="616"/>
    </location>
</feature>
<feature type="active site" description="Proton acceptor" evidence="3">
    <location>
        <position position="310"/>
    </location>
</feature>
<feature type="active site" description="Proton donor" evidence="3">
    <location>
        <position position="397"/>
    </location>
</feature>
<feature type="binding site" evidence="1">
    <location>
        <begin position="128"/>
        <end position="130"/>
    </location>
    <ligand>
        <name>substrate</name>
    </ligand>
</feature>
<feature type="binding site" evidence="1">
    <location>
        <begin position="282"/>
        <end position="286"/>
    </location>
    <ligand>
        <name>substrate</name>
    </ligand>
</feature>
<feature type="binding site" evidence="3">
    <location>
        <position position="309"/>
    </location>
    <ligand>
        <name>Zn(2+)</name>
        <dbReference type="ChEBI" id="CHEBI:29105"/>
        <note>catalytic</note>
    </ligand>
</feature>
<feature type="binding site" evidence="3">
    <location>
        <position position="313"/>
    </location>
    <ligand>
        <name>Zn(2+)</name>
        <dbReference type="ChEBI" id="CHEBI:29105"/>
        <note>catalytic</note>
    </ligand>
</feature>
<feature type="binding site" evidence="3">
    <location>
        <position position="332"/>
    </location>
    <ligand>
        <name>Zn(2+)</name>
        <dbReference type="ChEBI" id="CHEBI:29105"/>
        <note>catalytic</note>
    </ligand>
</feature>
<feature type="binding site" evidence="1">
    <location>
        <begin position="566"/>
        <end position="568"/>
    </location>
    <ligand>
        <name>substrate</name>
    </ligand>
</feature>
<protein>
    <recommendedName>
        <fullName>Leucine aminopeptidase</fullName>
        <ecNumber>3.4.11.-</ecNumber>
    </recommendedName>
    <alternativeName>
        <fullName>Epoxide hydrolase</fullName>
        <ecNumber>3.3.2.10</ecNumber>
    </alternativeName>
    <alternativeName>
        <fullName>Leukotriene A-4 hydrolase homolog</fullName>
        <shortName>LTA-4 hydrolase</shortName>
    </alternativeName>
</protein>
<name>LKHA4_ARATH</name>
<dbReference type="EC" id="3.4.11.-"/>
<dbReference type="EC" id="3.3.2.10"/>
<dbReference type="EMBL" id="AL391710">
    <property type="protein sequence ID" value="CAC05429.1"/>
    <property type="molecule type" value="Genomic_DNA"/>
</dbReference>
<dbReference type="EMBL" id="CP002688">
    <property type="protein sequence ID" value="AED91907.1"/>
    <property type="molecule type" value="Genomic_DNA"/>
</dbReference>
<dbReference type="EMBL" id="AY074335">
    <property type="protein sequence ID" value="AAL67031.1"/>
    <property type="molecule type" value="mRNA"/>
</dbReference>
<dbReference type="EMBL" id="AY133832">
    <property type="protein sequence ID" value="AAM91766.1"/>
    <property type="molecule type" value="mRNA"/>
</dbReference>
<dbReference type="EMBL" id="AK220991">
    <property type="protein sequence ID" value="BAD94611.1"/>
    <property type="status" value="ALT_INIT"/>
    <property type="molecule type" value="mRNA"/>
</dbReference>
<dbReference type="RefSeq" id="NP_196856.1">
    <property type="nucleotide sequence ID" value="NM_121355.5"/>
</dbReference>
<dbReference type="SMR" id="Q9FY49"/>
<dbReference type="BioGRID" id="16474">
    <property type="interactions" value="2"/>
</dbReference>
<dbReference type="FunCoup" id="Q9FY49">
    <property type="interactions" value="3623"/>
</dbReference>
<dbReference type="IntAct" id="Q9FY49">
    <property type="interactions" value="1"/>
</dbReference>
<dbReference type="STRING" id="3702.Q9FY49"/>
<dbReference type="MEROPS" id="M01.A26"/>
<dbReference type="iPTMnet" id="Q9FY49"/>
<dbReference type="PaxDb" id="3702-AT5G13520.1"/>
<dbReference type="ProteomicsDB" id="238561"/>
<dbReference type="EnsemblPlants" id="AT5G13520.1">
    <property type="protein sequence ID" value="AT5G13520.1"/>
    <property type="gene ID" value="AT5G13520"/>
</dbReference>
<dbReference type="GeneID" id="831196"/>
<dbReference type="Gramene" id="AT5G13520.1">
    <property type="protein sequence ID" value="AT5G13520.1"/>
    <property type="gene ID" value="AT5G13520"/>
</dbReference>
<dbReference type="KEGG" id="ath:AT5G13520"/>
<dbReference type="Araport" id="AT5G13520"/>
<dbReference type="TAIR" id="AT5G13520"/>
<dbReference type="eggNOG" id="KOG1047">
    <property type="taxonomic scope" value="Eukaryota"/>
</dbReference>
<dbReference type="HOGENOM" id="CLU_014505_4_1_1"/>
<dbReference type="InParanoid" id="Q9FY49"/>
<dbReference type="OMA" id="CTALQWM"/>
<dbReference type="PhylomeDB" id="Q9FY49"/>
<dbReference type="BioCyc" id="ARA:AT5G13520-MONOMER"/>
<dbReference type="PRO" id="PR:Q9FY49"/>
<dbReference type="Proteomes" id="UP000006548">
    <property type="component" value="Chromosome 5"/>
</dbReference>
<dbReference type="ExpressionAtlas" id="Q9FY49">
    <property type="expression patterns" value="baseline and differential"/>
</dbReference>
<dbReference type="GO" id="GO:0005829">
    <property type="term" value="C:cytosol"/>
    <property type="evidence" value="ECO:0007005"/>
    <property type="project" value="TAIR"/>
</dbReference>
<dbReference type="GO" id="GO:0004301">
    <property type="term" value="F:epoxide hydrolase activity"/>
    <property type="evidence" value="ECO:0007669"/>
    <property type="project" value="UniProtKB-EC"/>
</dbReference>
<dbReference type="GO" id="GO:0008237">
    <property type="term" value="F:metallopeptidase activity"/>
    <property type="evidence" value="ECO:0007669"/>
    <property type="project" value="UniProtKB-KW"/>
</dbReference>
<dbReference type="GO" id="GO:0008270">
    <property type="term" value="F:zinc ion binding"/>
    <property type="evidence" value="ECO:0007669"/>
    <property type="project" value="InterPro"/>
</dbReference>
<dbReference type="GO" id="GO:0019370">
    <property type="term" value="P:leukotriene biosynthetic process"/>
    <property type="evidence" value="ECO:0007669"/>
    <property type="project" value="UniProtKB-KW"/>
</dbReference>
<dbReference type="GO" id="GO:0006508">
    <property type="term" value="P:proteolysis"/>
    <property type="evidence" value="ECO:0007669"/>
    <property type="project" value="UniProtKB-KW"/>
</dbReference>
<dbReference type="CDD" id="cd09599">
    <property type="entry name" value="M1_LTA4H"/>
    <property type="match status" value="1"/>
</dbReference>
<dbReference type="FunFam" id="1.10.390.10:FF:000003">
    <property type="entry name" value="Leukotriene A(4) hydrolase"/>
    <property type="match status" value="1"/>
</dbReference>
<dbReference type="FunFam" id="3.30.2010.30:FF:000001">
    <property type="entry name" value="Leukotriene A(4) hydrolase"/>
    <property type="match status" value="1"/>
</dbReference>
<dbReference type="Gene3D" id="3.30.2010.30">
    <property type="match status" value="1"/>
</dbReference>
<dbReference type="Gene3D" id="1.10.390.10">
    <property type="entry name" value="Neutral Protease Domain 2"/>
    <property type="match status" value="1"/>
</dbReference>
<dbReference type="Gene3D" id="1.25.40.320">
    <property type="entry name" value="Peptidase M1, leukotriene A4 hydrolase/aminopeptidase C-terminal domain"/>
    <property type="match status" value="1"/>
</dbReference>
<dbReference type="Gene3D" id="2.60.40.1730">
    <property type="entry name" value="tricorn interacting facor f3 domain"/>
    <property type="match status" value="1"/>
</dbReference>
<dbReference type="InterPro" id="IPR045357">
    <property type="entry name" value="Aminopeptidase_N-like_N"/>
</dbReference>
<dbReference type="InterPro" id="IPR042097">
    <property type="entry name" value="Aminopeptidase_N-like_N_sf"/>
</dbReference>
<dbReference type="InterPro" id="IPR016024">
    <property type="entry name" value="ARM-type_fold"/>
</dbReference>
<dbReference type="InterPro" id="IPR049980">
    <property type="entry name" value="LTA4H_cat"/>
</dbReference>
<dbReference type="InterPro" id="IPR038502">
    <property type="entry name" value="M1_LTA-4_hydro/amino_C_sf"/>
</dbReference>
<dbReference type="InterPro" id="IPR034015">
    <property type="entry name" value="M1_LTA4H"/>
</dbReference>
<dbReference type="InterPro" id="IPR001930">
    <property type="entry name" value="Peptidase_M1"/>
</dbReference>
<dbReference type="InterPro" id="IPR015211">
    <property type="entry name" value="Peptidase_M1_C"/>
</dbReference>
<dbReference type="InterPro" id="IPR014782">
    <property type="entry name" value="Peptidase_M1_dom"/>
</dbReference>
<dbReference type="InterPro" id="IPR027268">
    <property type="entry name" value="Peptidase_M4/M1_CTD_sf"/>
</dbReference>
<dbReference type="PANTHER" id="PTHR45726">
    <property type="entry name" value="LEUKOTRIENE A-4 HYDROLASE"/>
    <property type="match status" value="1"/>
</dbReference>
<dbReference type="PANTHER" id="PTHR45726:SF3">
    <property type="entry name" value="LEUKOTRIENE A-4 HYDROLASE"/>
    <property type="match status" value="1"/>
</dbReference>
<dbReference type="Pfam" id="PF09127">
    <property type="entry name" value="Leuk-A4-hydro_C"/>
    <property type="match status" value="1"/>
</dbReference>
<dbReference type="Pfam" id="PF01433">
    <property type="entry name" value="Peptidase_M1"/>
    <property type="match status" value="1"/>
</dbReference>
<dbReference type="Pfam" id="PF17900">
    <property type="entry name" value="Peptidase_M1_N"/>
    <property type="match status" value="1"/>
</dbReference>
<dbReference type="PRINTS" id="PR00756">
    <property type="entry name" value="ALADIPTASE"/>
</dbReference>
<dbReference type="SMART" id="SM01263">
    <property type="entry name" value="Leuk-A4-hydro_C"/>
    <property type="match status" value="1"/>
</dbReference>
<dbReference type="SUPFAM" id="SSF48371">
    <property type="entry name" value="ARM repeat"/>
    <property type="match status" value="1"/>
</dbReference>
<dbReference type="SUPFAM" id="SSF63737">
    <property type="entry name" value="Leukotriene A4 hydrolase N-terminal domain"/>
    <property type="match status" value="1"/>
</dbReference>
<dbReference type="SUPFAM" id="SSF55486">
    <property type="entry name" value="Metalloproteases ('zincins'), catalytic domain"/>
    <property type="match status" value="1"/>
</dbReference>
<dbReference type="PROSITE" id="PS00142">
    <property type="entry name" value="ZINC_PROTEASE"/>
    <property type="match status" value="1"/>
</dbReference>
<proteinExistence type="evidence at transcript level"/>
<reference key="1">
    <citation type="journal article" date="2000" name="Nature">
        <title>Sequence and analysis of chromosome 5 of the plant Arabidopsis thaliana.</title>
        <authorList>
            <person name="Tabata S."/>
            <person name="Kaneko T."/>
            <person name="Nakamura Y."/>
            <person name="Kotani H."/>
            <person name="Kato T."/>
            <person name="Asamizu E."/>
            <person name="Miyajima N."/>
            <person name="Sasamoto S."/>
            <person name="Kimura T."/>
            <person name="Hosouchi T."/>
            <person name="Kawashima K."/>
            <person name="Kohara M."/>
            <person name="Matsumoto M."/>
            <person name="Matsuno A."/>
            <person name="Muraki A."/>
            <person name="Nakayama S."/>
            <person name="Nakazaki N."/>
            <person name="Naruo K."/>
            <person name="Okumura S."/>
            <person name="Shinpo S."/>
            <person name="Takeuchi C."/>
            <person name="Wada T."/>
            <person name="Watanabe A."/>
            <person name="Yamada M."/>
            <person name="Yasuda M."/>
            <person name="Sato S."/>
            <person name="de la Bastide M."/>
            <person name="Huang E."/>
            <person name="Spiegel L."/>
            <person name="Gnoj L."/>
            <person name="O'Shaughnessy A."/>
            <person name="Preston R."/>
            <person name="Habermann K."/>
            <person name="Murray J."/>
            <person name="Johnson D."/>
            <person name="Rohlfing T."/>
            <person name="Nelson J."/>
            <person name="Stoneking T."/>
            <person name="Pepin K."/>
            <person name="Spieth J."/>
            <person name="Sekhon M."/>
            <person name="Armstrong J."/>
            <person name="Becker M."/>
            <person name="Belter E."/>
            <person name="Cordum H."/>
            <person name="Cordes M."/>
            <person name="Courtney L."/>
            <person name="Courtney W."/>
            <person name="Dante M."/>
            <person name="Du H."/>
            <person name="Edwards J."/>
            <person name="Fryman J."/>
            <person name="Haakensen B."/>
            <person name="Lamar E."/>
            <person name="Latreille P."/>
            <person name="Leonard S."/>
            <person name="Meyer R."/>
            <person name="Mulvaney E."/>
            <person name="Ozersky P."/>
            <person name="Riley A."/>
            <person name="Strowmatt C."/>
            <person name="Wagner-McPherson C."/>
            <person name="Wollam A."/>
            <person name="Yoakum M."/>
            <person name="Bell M."/>
            <person name="Dedhia N."/>
            <person name="Parnell L."/>
            <person name="Shah R."/>
            <person name="Rodriguez M."/>
            <person name="Hoon See L."/>
            <person name="Vil D."/>
            <person name="Baker J."/>
            <person name="Kirchoff K."/>
            <person name="Toth K."/>
            <person name="King L."/>
            <person name="Bahret A."/>
            <person name="Miller B."/>
            <person name="Marra M.A."/>
            <person name="Martienssen R."/>
            <person name="McCombie W.R."/>
            <person name="Wilson R.K."/>
            <person name="Murphy G."/>
            <person name="Bancroft I."/>
            <person name="Volckaert G."/>
            <person name="Wambutt R."/>
            <person name="Duesterhoeft A."/>
            <person name="Stiekema W."/>
            <person name="Pohl T."/>
            <person name="Entian K.-D."/>
            <person name="Terryn N."/>
            <person name="Hartley N."/>
            <person name="Bent E."/>
            <person name="Johnson S."/>
            <person name="Langham S.-A."/>
            <person name="McCullagh B."/>
            <person name="Robben J."/>
            <person name="Grymonprez B."/>
            <person name="Zimmermann W."/>
            <person name="Ramsperger U."/>
            <person name="Wedler H."/>
            <person name="Balke K."/>
            <person name="Wedler E."/>
            <person name="Peters S."/>
            <person name="van Staveren M."/>
            <person name="Dirkse W."/>
            <person name="Mooijman P."/>
            <person name="Klein Lankhorst R."/>
            <person name="Weitzenegger T."/>
            <person name="Bothe G."/>
            <person name="Rose M."/>
            <person name="Hauf J."/>
            <person name="Berneiser S."/>
            <person name="Hempel S."/>
            <person name="Feldpausch M."/>
            <person name="Lamberth S."/>
            <person name="Villarroel R."/>
            <person name="Gielen J."/>
            <person name="Ardiles W."/>
            <person name="Bents O."/>
            <person name="Lemcke K."/>
            <person name="Kolesov G."/>
            <person name="Mayer K.F.X."/>
            <person name="Rudd S."/>
            <person name="Schoof H."/>
            <person name="Schueller C."/>
            <person name="Zaccaria P."/>
            <person name="Mewes H.-W."/>
            <person name="Bevan M."/>
            <person name="Fransz P.F."/>
        </authorList>
    </citation>
    <scope>NUCLEOTIDE SEQUENCE [LARGE SCALE GENOMIC DNA]</scope>
    <source>
        <strain>cv. Columbia</strain>
    </source>
</reference>
<reference key="2">
    <citation type="journal article" date="2017" name="Plant J.">
        <title>Araport11: a complete reannotation of the Arabidopsis thaliana reference genome.</title>
        <authorList>
            <person name="Cheng C.Y."/>
            <person name="Krishnakumar V."/>
            <person name="Chan A.P."/>
            <person name="Thibaud-Nissen F."/>
            <person name="Schobel S."/>
            <person name="Town C.D."/>
        </authorList>
    </citation>
    <scope>GENOME REANNOTATION</scope>
    <source>
        <strain>cv. Columbia</strain>
    </source>
</reference>
<reference key="3">
    <citation type="journal article" date="2003" name="Science">
        <title>Empirical analysis of transcriptional activity in the Arabidopsis genome.</title>
        <authorList>
            <person name="Yamada K."/>
            <person name="Lim J."/>
            <person name="Dale J.M."/>
            <person name="Chen H."/>
            <person name="Shinn P."/>
            <person name="Palm C.J."/>
            <person name="Southwick A.M."/>
            <person name="Wu H.C."/>
            <person name="Kim C.J."/>
            <person name="Nguyen M."/>
            <person name="Pham P.K."/>
            <person name="Cheuk R.F."/>
            <person name="Karlin-Newmann G."/>
            <person name="Liu S.X."/>
            <person name="Lam B."/>
            <person name="Sakano H."/>
            <person name="Wu T."/>
            <person name="Yu G."/>
            <person name="Miranda M."/>
            <person name="Quach H.L."/>
            <person name="Tripp M."/>
            <person name="Chang C.H."/>
            <person name="Lee J.M."/>
            <person name="Toriumi M.J."/>
            <person name="Chan M.M."/>
            <person name="Tang C.C."/>
            <person name="Onodera C.S."/>
            <person name="Deng J.M."/>
            <person name="Akiyama K."/>
            <person name="Ansari Y."/>
            <person name="Arakawa T."/>
            <person name="Banh J."/>
            <person name="Banno F."/>
            <person name="Bowser L."/>
            <person name="Brooks S.Y."/>
            <person name="Carninci P."/>
            <person name="Chao Q."/>
            <person name="Choy N."/>
            <person name="Enju A."/>
            <person name="Goldsmith A.D."/>
            <person name="Gurjal M."/>
            <person name="Hansen N.F."/>
            <person name="Hayashizaki Y."/>
            <person name="Johnson-Hopson C."/>
            <person name="Hsuan V.W."/>
            <person name="Iida K."/>
            <person name="Karnes M."/>
            <person name="Khan S."/>
            <person name="Koesema E."/>
            <person name="Ishida J."/>
            <person name="Jiang P.X."/>
            <person name="Jones T."/>
            <person name="Kawai J."/>
            <person name="Kamiya A."/>
            <person name="Meyers C."/>
            <person name="Nakajima M."/>
            <person name="Narusaka M."/>
            <person name="Seki M."/>
            <person name="Sakurai T."/>
            <person name="Satou M."/>
            <person name="Tamse R."/>
            <person name="Vaysberg M."/>
            <person name="Wallender E.K."/>
            <person name="Wong C."/>
            <person name="Yamamura Y."/>
            <person name="Yuan S."/>
            <person name="Shinozaki K."/>
            <person name="Davis R.W."/>
            <person name="Theologis A."/>
            <person name="Ecker J.R."/>
        </authorList>
    </citation>
    <scope>NUCLEOTIDE SEQUENCE [LARGE SCALE MRNA]</scope>
    <source>
        <strain>cv. Columbia</strain>
    </source>
</reference>
<reference key="4">
    <citation type="submission" date="2005-03" db="EMBL/GenBank/DDBJ databases">
        <title>Large-scale analysis of RIKEN Arabidopsis full-length (RAFL) cDNAs.</title>
        <authorList>
            <person name="Totoki Y."/>
            <person name="Seki M."/>
            <person name="Ishida J."/>
            <person name="Nakajima M."/>
            <person name="Enju A."/>
            <person name="Kamiya A."/>
            <person name="Narusaka M."/>
            <person name="Shin-i T."/>
            <person name="Nakagawa M."/>
            <person name="Sakamoto N."/>
            <person name="Oishi K."/>
            <person name="Kohara Y."/>
            <person name="Kobayashi M."/>
            <person name="Toyoda A."/>
            <person name="Sakaki Y."/>
            <person name="Sakurai T."/>
            <person name="Iida K."/>
            <person name="Akiyama K."/>
            <person name="Satou M."/>
            <person name="Toyoda T."/>
            <person name="Konagaya A."/>
            <person name="Carninci P."/>
            <person name="Kawai J."/>
            <person name="Hayashizaki Y."/>
            <person name="Shinozaki K."/>
        </authorList>
    </citation>
    <scope>NUCLEOTIDE SEQUENCE [LARGE SCALE MRNA] OF 468-616</scope>
    <source>
        <strain>cv. Columbia</strain>
    </source>
</reference>
<evidence type="ECO:0000250" key="1"/>
<evidence type="ECO:0000250" key="2">
    <source>
        <dbReference type="UniProtKB" id="Q10740"/>
    </source>
</evidence>
<evidence type="ECO:0000255" key="3">
    <source>
        <dbReference type="PROSITE-ProRule" id="PRU10095"/>
    </source>
</evidence>
<evidence type="ECO:0000305" key="4"/>
<organism>
    <name type="scientific">Arabidopsis thaliana</name>
    <name type="common">Mouse-ear cress</name>
    <dbReference type="NCBI Taxonomy" id="3702"/>
    <lineage>
        <taxon>Eukaryota</taxon>
        <taxon>Viridiplantae</taxon>
        <taxon>Streptophyta</taxon>
        <taxon>Embryophyta</taxon>
        <taxon>Tracheophyta</taxon>
        <taxon>Spermatophyta</taxon>
        <taxon>Magnoliopsida</taxon>
        <taxon>eudicotyledons</taxon>
        <taxon>Gunneridae</taxon>
        <taxon>Pentapetalae</taxon>
        <taxon>rosids</taxon>
        <taxon>malvids</taxon>
        <taxon>Brassicales</taxon>
        <taxon>Brassicaceae</taxon>
        <taxon>Camelineae</taxon>
        <taxon>Arabidopsis</taxon>
    </lineage>
</organism>
<comment type="function">
    <text evidence="2">Aminopeptidase that preferentially cleaves di- and tripeptides. Also has low epoxide hydrolase activity (in vitro). Can hydrolyze the epoxide leukotriene LTA(4) but it forms preferentially 5,6-dihydroxy-7,9,11,14-eicosatetraenoic acid rather than the cytokine leukotriene B(4) as the product compared to the homologous mammalian enzyme (in vitro).</text>
</comment>
<comment type="catalytic activity">
    <reaction evidence="2">
        <text>an epoxide + H2O = an ethanediol</text>
        <dbReference type="Rhea" id="RHEA:19037"/>
        <dbReference type="ChEBI" id="CHEBI:15377"/>
        <dbReference type="ChEBI" id="CHEBI:32955"/>
        <dbReference type="ChEBI" id="CHEBI:140594"/>
        <dbReference type="EC" id="3.3.2.10"/>
    </reaction>
</comment>
<comment type="cofactor">
    <cofactor evidence="2">
        <name>Zn(2+)</name>
        <dbReference type="ChEBI" id="CHEBI:29105"/>
    </cofactor>
    <text evidence="2">Binds 1 zinc ion per subunit.</text>
</comment>
<comment type="subcellular location">
    <subcellularLocation>
        <location evidence="1">Cytoplasm</location>
    </subcellularLocation>
</comment>
<comment type="similarity">
    <text evidence="4">Belongs to the peptidase M1 family.</text>
</comment>
<comment type="sequence caution" evidence="4">
    <conflict type="erroneous initiation">
        <sequence resource="EMBL-CDS" id="BAD94611"/>
    </conflict>
    <text>Truncated N-terminus.</text>
</comment>
<accession>Q9FY49</accession>
<accession>Q56ZH4</accession>
<keyword id="KW-0963">Cytoplasm</keyword>
<keyword id="KW-0378">Hydrolase</keyword>
<keyword id="KW-0434">Leukotriene biosynthesis</keyword>
<keyword id="KW-0479">Metal-binding</keyword>
<keyword id="KW-0482">Metalloprotease</keyword>
<keyword id="KW-0645">Protease</keyword>
<keyword id="KW-1185">Reference proteome</keyword>
<keyword id="KW-0862">Zinc</keyword>
<sequence>MAPIDPHSFTDSSHPLTTHVALSLYLDFNTSIIHGSALLTLSSAFSGELSLDTRCISIAMVLDPLTLEPIPYSVSTTPDRIRGTEVVVVLSGQSSLLIVYSTSPSASALQWLSPLQTFSKLHPYVYTQCQAIHARSIFPCQDTPAARIRYDVVMNIPNSLSAVMSARHVRRRLAVPEEAKHLEAGSLGSSLWCGEDRVVEEFAMEQPIPPYLFAFAVGELGFREVGPRTRVYTESAAIEVLDAAALEFAGTEDMIKQGEKLFGDYEWERFDLLVLPPSFPYGGMENPRMVFLTPTVIKGDATGAQVVAHELAHSWTGNLITNINNEHFWLNEGFTTYAERRIVEVVQGADIATLNIGIGWRGLTDEMERFKDNLECTKLWNKQEGVDPDDVYSQVPYEKGFQFVLRIERQIGRTAFDEFLKKYIATFKFKSIDTNTFLEFLKANIPGIEKEINLQLWTEGVGIPEDAYEPVSTIYTKIISLAKEFKEGKMPSEDDVAEWNGQEWELYLENLPKSCEPSQVMALDKRYRLAESKDYEVKVSFLQLAVTSKCREYHGEVKKTLKEVGRMKYLRPLFTALAQSGGTEEKQLAKQVFAEARETYHPIAQGVVESILSKYI</sequence>
<gene>
    <name type="primary">LKHA4</name>
    <name type="ordered locus">At5g13520</name>
    <name type="ORF">T6I14_50</name>
</gene>